<protein>
    <recommendedName>
        <fullName>UTP--glucose-1-phosphate uridylyltransferase</fullName>
        <ecNumber>2.7.7.9</ecNumber>
    </recommendedName>
    <alternativeName>
        <fullName>Alpha-D-glucosyl-1-phosphate uridylyltransferase</fullName>
    </alternativeName>
    <alternativeName>
        <fullName>UDP-glucose pyrophosphorylase</fullName>
        <shortName>UDPGP</shortName>
    </alternativeName>
    <alternativeName>
        <fullName>Uridine diphosphoglucose pyrophosphorylase</fullName>
    </alternativeName>
</protein>
<sequence length="297" mass="32958">MMNLKAVIPVAGLGMHMLPATKAIPKEMLPIVDKPMIQYIVDEIVAAGIKEIVLVTHASKNAVENHFDTSYELESLLEQRVKRQLLAEVQSICPPGVTIMNVRQAQPLGLGHSILCARPVVGDNPFIVVLPDIIIDDATADPLRYNLAAMVARFNETGRSQVLAKRMKGDLSEYSVIQTKEPLDNEGKVSRIVEFIEKPDQPQTLDSDLMAVGRYVLSADIWAELERTEPGAWGRIQLTDAIAELAKKQSVDAMLMTGDSYDCGKKMGYMQAFVKYGLRNLKEGAKFRKSIEQLLHE</sequence>
<comment type="function">
    <text>May play a role in stationary phase survival.</text>
</comment>
<comment type="catalytic activity">
    <reaction>
        <text>alpha-D-glucose 1-phosphate + UTP + H(+) = UDP-alpha-D-glucose + diphosphate</text>
        <dbReference type="Rhea" id="RHEA:19889"/>
        <dbReference type="ChEBI" id="CHEBI:15378"/>
        <dbReference type="ChEBI" id="CHEBI:33019"/>
        <dbReference type="ChEBI" id="CHEBI:46398"/>
        <dbReference type="ChEBI" id="CHEBI:58601"/>
        <dbReference type="ChEBI" id="CHEBI:58885"/>
        <dbReference type="EC" id="2.7.7.9"/>
    </reaction>
</comment>
<comment type="pathway">
    <text>Carbohydrate metabolism; nucleotide-sugar metabolism.</text>
</comment>
<comment type="pathway">
    <text>Bacterial outer membrane biogenesis; lipopolysaccharide biosynthesis.</text>
</comment>
<comment type="similarity">
    <text evidence="1">Belongs to the UDPGP type 2 family.</text>
</comment>
<dbReference type="EC" id="2.7.7.9"/>
<dbReference type="EMBL" id="X56793">
    <property type="protein sequence ID" value="CAA40114.1"/>
    <property type="molecule type" value="Genomic_DNA"/>
</dbReference>
<dbReference type="EMBL" id="AE006468">
    <property type="protein sequence ID" value="AAL21002.1"/>
    <property type="molecule type" value="Genomic_DNA"/>
</dbReference>
<dbReference type="RefSeq" id="NP_461043.1">
    <property type="nucleotide sequence ID" value="NC_003197.2"/>
</dbReference>
<dbReference type="RefSeq" id="WP_000981469.1">
    <property type="nucleotide sequence ID" value="NC_003197.2"/>
</dbReference>
<dbReference type="SMR" id="P0A2K7"/>
<dbReference type="STRING" id="99287.STM2098"/>
<dbReference type="PaxDb" id="99287-STM2098"/>
<dbReference type="GeneID" id="1253619"/>
<dbReference type="KEGG" id="stm:STM2098"/>
<dbReference type="PATRIC" id="fig|99287.12.peg.2220"/>
<dbReference type="HOGENOM" id="CLU_029499_1_1_6"/>
<dbReference type="PhylomeDB" id="P0A2K7"/>
<dbReference type="BioCyc" id="SENT99287:STM2098-MONOMER"/>
<dbReference type="UniPathway" id="UPA00030"/>
<dbReference type="UniPathway" id="UPA00215"/>
<dbReference type="Proteomes" id="UP000001014">
    <property type="component" value="Chromosome"/>
</dbReference>
<dbReference type="GO" id="GO:0030234">
    <property type="term" value="F:enzyme regulator activity"/>
    <property type="evidence" value="ECO:0007669"/>
    <property type="project" value="InterPro"/>
</dbReference>
<dbReference type="GO" id="GO:0003983">
    <property type="term" value="F:UTP:glucose-1-phosphate uridylyltransferase activity"/>
    <property type="evidence" value="ECO:0007669"/>
    <property type="project" value="UniProtKB-EC"/>
</dbReference>
<dbReference type="GO" id="GO:0009103">
    <property type="term" value="P:lipopolysaccharide biosynthetic process"/>
    <property type="evidence" value="ECO:0007669"/>
    <property type="project" value="UniProtKB-UniPathway"/>
</dbReference>
<dbReference type="GO" id="GO:0006011">
    <property type="term" value="P:UDP-alpha-D-glucose metabolic process"/>
    <property type="evidence" value="ECO:0007669"/>
    <property type="project" value="InterPro"/>
</dbReference>
<dbReference type="CDD" id="cd02541">
    <property type="entry name" value="UGPase_prokaryotic"/>
    <property type="match status" value="1"/>
</dbReference>
<dbReference type="FunFam" id="3.90.550.10:FF:000008">
    <property type="entry name" value="UTP--glucose-1-phosphate uridylyltransferase"/>
    <property type="match status" value="1"/>
</dbReference>
<dbReference type="Gene3D" id="3.90.550.10">
    <property type="entry name" value="Spore Coat Polysaccharide Biosynthesis Protein SpsA, Chain A"/>
    <property type="match status" value="1"/>
</dbReference>
<dbReference type="InterPro" id="IPR005774">
    <property type="entry name" value="GalF"/>
</dbReference>
<dbReference type="InterPro" id="IPR005771">
    <property type="entry name" value="GalU_uridylyltTrfase_bac/arc"/>
</dbReference>
<dbReference type="InterPro" id="IPR005835">
    <property type="entry name" value="NTP_transferase_dom"/>
</dbReference>
<dbReference type="InterPro" id="IPR029044">
    <property type="entry name" value="Nucleotide-diphossugar_trans"/>
</dbReference>
<dbReference type="NCBIfam" id="TIGR01105">
    <property type="entry name" value="galF"/>
    <property type="match status" value="1"/>
</dbReference>
<dbReference type="NCBIfam" id="NF007516">
    <property type="entry name" value="PRK10122.1"/>
    <property type="match status" value="1"/>
</dbReference>
<dbReference type="PANTHER" id="PTHR43197">
    <property type="entry name" value="UTP--GLUCOSE-1-PHOSPHATE URIDYLYLTRANSFERASE"/>
    <property type="match status" value="1"/>
</dbReference>
<dbReference type="PANTHER" id="PTHR43197:SF2">
    <property type="entry name" value="UTP--GLUCOSE-1-PHOSPHATE URIDYLYLTRANSFERASE"/>
    <property type="match status" value="1"/>
</dbReference>
<dbReference type="Pfam" id="PF00483">
    <property type="entry name" value="NTP_transferase"/>
    <property type="match status" value="1"/>
</dbReference>
<dbReference type="SUPFAM" id="SSF53448">
    <property type="entry name" value="Nucleotide-diphospho-sugar transferases"/>
    <property type="match status" value="1"/>
</dbReference>
<gene>
    <name type="primary">galF</name>
    <name type="ordered locus">STM2098</name>
</gene>
<name>GALF_SALTY</name>
<keyword id="KW-0448">Lipopolysaccharide biosynthesis</keyword>
<keyword id="KW-0548">Nucleotidyltransferase</keyword>
<keyword id="KW-1185">Reference proteome</keyword>
<keyword id="KW-0808">Transferase</keyword>
<evidence type="ECO:0000305" key="1"/>
<accession>P0A2K7</accession>
<accession>P26390</accession>
<reference key="1">
    <citation type="journal article" date="1991" name="Mol. Microbiol.">
        <title>Structure and sequence of the rfb (O antigen) gene cluster of Salmonella serovar typhimurium (strain LT2).</title>
        <authorList>
            <person name="Jiang X.-M."/>
            <person name="Neal B."/>
            <person name="Santiago F."/>
            <person name="Lee S.J."/>
            <person name="Romana L.K."/>
            <person name="Reeves P.R."/>
        </authorList>
    </citation>
    <scope>NUCLEOTIDE SEQUENCE [GENOMIC DNA]</scope>
    <source>
        <strain>LT2</strain>
    </source>
</reference>
<reference key="2">
    <citation type="journal article" date="2001" name="Nature">
        <title>Complete genome sequence of Salmonella enterica serovar Typhimurium LT2.</title>
        <authorList>
            <person name="McClelland M."/>
            <person name="Sanderson K.E."/>
            <person name="Spieth J."/>
            <person name="Clifton S.W."/>
            <person name="Latreille P."/>
            <person name="Courtney L."/>
            <person name="Porwollik S."/>
            <person name="Ali J."/>
            <person name="Dante M."/>
            <person name="Du F."/>
            <person name="Hou S."/>
            <person name="Layman D."/>
            <person name="Leonard S."/>
            <person name="Nguyen C."/>
            <person name="Scott K."/>
            <person name="Holmes A."/>
            <person name="Grewal N."/>
            <person name="Mulvaney E."/>
            <person name="Ryan E."/>
            <person name="Sun H."/>
            <person name="Florea L."/>
            <person name="Miller W."/>
            <person name="Stoneking T."/>
            <person name="Nhan M."/>
            <person name="Waterston R."/>
            <person name="Wilson R.K."/>
        </authorList>
    </citation>
    <scope>NUCLEOTIDE SEQUENCE [LARGE SCALE GENOMIC DNA]</scope>
    <source>
        <strain>LT2 / SGSC1412 / ATCC 700720</strain>
    </source>
</reference>
<proteinExistence type="inferred from homology"/>
<organism>
    <name type="scientific">Salmonella typhimurium (strain LT2 / SGSC1412 / ATCC 700720)</name>
    <dbReference type="NCBI Taxonomy" id="99287"/>
    <lineage>
        <taxon>Bacteria</taxon>
        <taxon>Pseudomonadati</taxon>
        <taxon>Pseudomonadota</taxon>
        <taxon>Gammaproteobacteria</taxon>
        <taxon>Enterobacterales</taxon>
        <taxon>Enterobacteriaceae</taxon>
        <taxon>Salmonella</taxon>
    </lineage>
</organism>
<feature type="chain" id="PRO_0000201352" description="UTP--glucose-1-phosphate uridylyltransferase">
    <location>
        <begin position="1"/>
        <end position="297"/>
    </location>
</feature>